<gene>
    <name type="primary">Adra1d</name>
    <name type="synonym">Adra1a</name>
    <name type="synonym">Gpcr8</name>
</gene>
<keyword id="KW-1003">Cell membrane</keyword>
<keyword id="KW-0297">G-protein coupled receptor</keyword>
<keyword id="KW-0325">Glycoprotein</keyword>
<keyword id="KW-0449">Lipoprotein</keyword>
<keyword id="KW-0472">Membrane</keyword>
<keyword id="KW-0564">Palmitate</keyword>
<keyword id="KW-0675">Receptor</keyword>
<keyword id="KW-1185">Reference proteome</keyword>
<keyword id="KW-0807">Transducer</keyword>
<keyword id="KW-0812">Transmembrane</keyword>
<keyword id="KW-1133">Transmembrane helix</keyword>
<comment type="function">
    <text>This alpha-adrenergic receptor mediates its effect through the influx of extracellular calcium.</text>
</comment>
<comment type="subunit">
    <text evidence="2">Interacts with FLNA (via filamin repeat 21); increases PKA-mediated phosphorylation of FLNA.</text>
</comment>
<comment type="subcellular location">
    <subcellularLocation>
        <location>Cell membrane</location>
        <topology>Multi-pass membrane protein</topology>
    </subcellularLocation>
</comment>
<comment type="PTM">
    <text evidence="6">Palmitoylated (PubMed:26715683). Palmitoylation by ZDHHC21 may increase the expression of the receptor and regulate downstream signaling (PubMed:26715683).</text>
</comment>
<comment type="similarity">
    <text evidence="4">Belongs to the G-protein coupled receptor 1 family. Adrenergic receptor subfamily. ADRA1D sub-subfamily.</text>
</comment>
<feature type="chain" id="PRO_0000069074" description="Alpha-1D adrenergic receptor">
    <location>
        <begin position="1"/>
        <end position="562"/>
    </location>
</feature>
<feature type="topological domain" description="Extracellular" evidence="1">
    <location>
        <begin position="1"/>
        <end position="90"/>
    </location>
</feature>
<feature type="transmembrane region" description="Helical; Name=1" evidence="1">
    <location>
        <begin position="91"/>
        <end position="115"/>
    </location>
</feature>
<feature type="topological domain" description="Cytoplasmic" evidence="1">
    <location>
        <begin position="116"/>
        <end position="127"/>
    </location>
</feature>
<feature type="transmembrane region" description="Helical; Name=2" evidence="1">
    <location>
        <begin position="128"/>
        <end position="153"/>
    </location>
</feature>
<feature type="topological domain" description="Extracellular" evidence="1">
    <location>
        <begin position="154"/>
        <end position="163"/>
    </location>
</feature>
<feature type="transmembrane region" description="Helical; Name=3" evidence="1">
    <location>
        <begin position="164"/>
        <end position="186"/>
    </location>
</feature>
<feature type="topological domain" description="Cytoplasmic" evidence="1">
    <location>
        <begin position="187"/>
        <end position="207"/>
    </location>
</feature>
<feature type="transmembrane region" description="Helical; Name=4" evidence="1">
    <location>
        <begin position="208"/>
        <end position="232"/>
    </location>
</feature>
<feature type="topological domain" description="Extracellular" evidence="1">
    <location>
        <begin position="233"/>
        <end position="245"/>
    </location>
</feature>
<feature type="transmembrane region" description="Helical; Name=5" evidence="1">
    <location>
        <begin position="246"/>
        <end position="269"/>
    </location>
</feature>
<feature type="topological domain" description="Cytoplasmic" evidence="1">
    <location>
        <begin position="270"/>
        <end position="342"/>
    </location>
</feature>
<feature type="transmembrane region" description="Helical; Name=6" evidence="1">
    <location>
        <begin position="343"/>
        <end position="367"/>
    </location>
</feature>
<feature type="topological domain" description="Extracellular" evidence="1">
    <location>
        <begin position="368"/>
        <end position="374"/>
    </location>
</feature>
<feature type="transmembrane region" description="Helical; Name=7" evidence="1">
    <location>
        <begin position="375"/>
        <end position="399"/>
    </location>
</feature>
<feature type="topological domain" description="Cytoplasmic" evidence="1">
    <location>
        <begin position="400"/>
        <end position="562"/>
    </location>
</feature>
<feature type="region of interest" description="Disordered" evidence="5">
    <location>
        <begin position="13"/>
        <end position="44"/>
    </location>
</feature>
<feature type="region of interest" description="Disordered" evidence="5">
    <location>
        <begin position="50"/>
        <end position="69"/>
    </location>
</feature>
<feature type="region of interest" description="Disordered" evidence="5">
    <location>
        <begin position="444"/>
        <end position="472"/>
    </location>
</feature>
<feature type="compositionally biased region" description="Gly residues" evidence="5">
    <location>
        <begin position="21"/>
        <end position="44"/>
    </location>
</feature>
<feature type="lipid moiety-binding region" description="S-palmitoyl cysteine" evidence="3">
    <location>
        <position position="413"/>
    </location>
</feature>
<feature type="glycosylation site" description="N-linked (GlcNAc...) asparagine" evidence="3">
    <location>
        <position position="60"/>
    </location>
</feature>
<feature type="glycosylation site" description="N-linked (GlcNAc...) asparagine" evidence="3">
    <location>
        <position position="76"/>
    </location>
</feature>
<feature type="sequence conflict" description="In Ref. 3; AAA16854." evidence="7" ref="3">
    <original>R</original>
    <variation>G</variation>
    <location>
        <position position="330"/>
    </location>
</feature>
<accession>P97714</accession>
<accession>Q61619</accession>
<sequence>MTFRDILSVTFEGPRASSSTGGSGAGGGAGTVGPEGPAVGGVPGATGGSAVVGTGSGEDNQSSTAEAGAAASGEVNGSAAVGGLVVSAQGVGVGVFLAAFILTAVAGNLLVILSVACNRHLQTVTNYFIVNLAVADLLLSAAVLPFSATMEVLGFWPFGRTFCDVWAAVDVLCCTASILSLCTISVDRYVGVRHSLKYPAIMTERKAAAILALLWAVALVVSVGPLLGWKEPVPPDERFCGITEEVGYAIFSSVCSFYLPMAVIVVMYCRVYVVARSTTRSLEAGIKREPGKASEVVLRIHCRGAATSAKGNPGTQSSKGHTLRSSLSVRLLKFSREKKAAKTLAIVVGVFVLCWFPFFFVLPLGSLFPQLKPSEGVFKVIFWLGYFNSCVNPLIYPCSSREFKRAFLRLLRCQCRRRRRRLWPSLRPPLASLDRRPALRLCPQPAHRTPRGSPSPHCTPRPGLRRHAGGAGFGLRPSKASLRLREWRLLGPLQRPTTQLRAKVSSLSHKFRSGGARRAETACALRSEVEAVSLNVPQDGAEAVICQAYEPGDLSNLRETDI</sequence>
<protein>
    <recommendedName>
        <fullName>Alpha-1D adrenergic receptor</fullName>
    </recommendedName>
    <alternativeName>
        <fullName>Alpha-1A adrenergic receptor</fullName>
    </alternativeName>
    <alternativeName>
        <fullName>Alpha-1D adrenoreceptor</fullName>
        <shortName>Alpha-1D adrenoceptor</shortName>
    </alternativeName>
</protein>
<proteinExistence type="evidence at protein level"/>
<dbReference type="EMBL" id="S80044">
    <property type="protein sequence ID" value="AAB47042.1"/>
    <property type="molecule type" value="mRNA"/>
</dbReference>
<dbReference type="EMBL" id="AB030642">
    <property type="protein sequence ID" value="BAA90312.1"/>
    <property type="molecule type" value="Genomic_DNA"/>
</dbReference>
<dbReference type="EMBL" id="L20333">
    <property type="protein sequence ID" value="AAA16854.1"/>
    <property type="molecule type" value="mRNA"/>
</dbReference>
<dbReference type="PIR" id="D48909">
    <property type="entry name" value="D48909"/>
</dbReference>
<dbReference type="SMR" id="P97714"/>
<dbReference type="CORUM" id="P97714"/>
<dbReference type="FunCoup" id="P97714">
    <property type="interactions" value="491"/>
</dbReference>
<dbReference type="STRING" id="10090.ENSMUSP00000099473"/>
<dbReference type="BindingDB" id="P97714"/>
<dbReference type="ChEMBL" id="CHEMBL2130"/>
<dbReference type="GlyCosmos" id="P97714">
    <property type="glycosylation" value="2 sites, No reported glycans"/>
</dbReference>
<dbReference type="GlyGen" id="P97714">
    <property type="glycosylation" value="2 sites"/>
</dbReference>
<dbReference type="PhosphoSitePlus" id="P97714"/>
<dbReference type="PaxDb" id="10090-ENSMUSP00000099473"/>
<dbReference type="AGR" id="MGI:106673"/>
<dbReference type="MGI" id="MGI:106673">
    <property type="gene designation" value="Adra1d"/>
</dbReference>
<dbReference type="InParanoid" id="P97714"/>
<dbReference type="Reactome" id="R-MMU-390696">
    <property type="pathway name" value="Adrenoceptors"/>
</dbReference>
<dbReference type="Reactome" id="R-MMU-416476">
    <property type="pathway name" value="G alpha (q) signalling events"/>
</dbReference>
<dbReference type="Reactome" id="R-MMU-416482">
    <property type="pathway name" value="G alpha (12/13) signalling events"/>
</dbReference>
<dbReference type="ChiTaRS" id="Adra1a">
    <property type="organism name" value="mouse"/>
</dbReference>
<dbReference type="PRO" id="PR:P97714"/>
<dbReference type="Proteomes" id="UP000000589">
    <property type="component" value="Unplaced"/>
</dbReference>
<dbReference type="RNAct" id="P97714">
    <property type="molecule type" value="protein"/>
</dbReference>
<dbReference type="GO" id="GO:0005886">
    <property type="term" value="C:plasma membrane"/>
    <property type="evidence" value="ECO:0007669"/>
    <property type="project" value="UniProtKB-SubCell"/>
</dbReference>
<dbReference type="GO" id="GO:0004937">
    <property type="term" value="F:alpha1-adrenergic receptor activity"/>
    <property type="evidence" value="ECO:0000314"/>
    <property type="project" value="MGI"/>
</dbReference>
<dbReference type="GO" id="GO:0001986">
    <property type="term" value="P:negative regulation of the force of heart contraction involved in baroreceptor response to increased systemic arterial blood pressure"/>
    <property type="evidence" value="ECO:0000315"/>
    <property type="project" value="MGI"/>
</dbReference>
<dbReference type="GO" id="GO:0150099">
    <property type="term" value="P:neuron-glial cell signaling"/>
    <property type="evidence" value="ECO:0000316"/>
    <property type="project" value="ARUK-UCL"/>
</dbReference>
<dbReference type="GO" id="GO:0001994">
    <property type="term" value="P:norepinephrine-epinephrine vasoconstriction involved in regulation of systemic arterial blood pressure"/>
    <property type="evidence" value="ECO:0000315"/>
    <property type="project" value="MGI"/>
</dbReference>
<dbReference type="GO" id="GO:0008217">
    <property type="term" value="P:regulation of blood pressure"/>
    <property type="evidence" value="ECO:0000315"/>
    <property type="project" value="MGI"/>
</dbReference>
<dbReference type="FunFam" id="1.20.1070.10:FF:000208">
    <property type="entry name" value="Alpha-1D adrenergic receptor"/>
    <property type="match status" value="1"/>
</dbReference>
<dbReference type="Gene3D" id="1.20.1070.10">
    <property type="entry name" value="Rhodopsin 7-helix transmembrane proteins"/>
    <property type="match status" value="1"/>
</dbReference>
<dbReference type="InterPro" id="IPR002233">
    <property type="entry name" value="ADR_fam"/>
</dbReference>
<dbReference type="InterPro" id="IPR000363">
    <property type="entry name" value="ADRA1D_rcpt"/>
</dbReference>
<dbReference type="InterPro" id="IPR000276">
    <property type="entry name" value="GPCR_Rhodpsn"/>
</dbReference>
<dbReference type="InterPro" id="IPR017452">
    <property type="entry name" value="GPCR_Rhodpsn_7TM"/>
</dbReference>
<dbReference type="PANTHER" id="PTHR24248">
    <property type="entry name" value="ADRENERGIC RECEPTOR-RELATED G-PROTEIN COUPLED RECEPTOR"/>
    <property type="match status" value="1"/>
</dbReference>
<dbReference type="PANTHER" id="PTHR24248:SF14">
    <property type="entry name" value="ALPHA-1D ADRENERGIC RECEPTOR"/>
    <property type="match status" value="1"/>
</dbReference>
<dbReference type="Pfam" id="PF00001">
    <property type="entry name" value="7tm_1"/>
    <property type="match status" value="1"/>
</dbReference>
<dbReference type="PRINTS" id="PR01103">
    <property type="entry name" value="ADRENERGICR"/>
</dbReference>
<dbReference type="PRINTS" id="PR00240">
    <property type="entry name" value="ADRENRGCA1DR"/>
</dbReference>
<dbReference type="PRINTS" id="PR00237">
    <property type="entry name" value="GPCRRHODOPSN"/>
</dbReference>
<dbReference type="SMART" id="SM01381">
    <property type="entry name" value="7TM_GPCR_Srsx"/>
    <property type="match status" value="1"/>
</dbReference>
<dbReference type="SUPFAM" id="SSF81321">
    <property type="entry name" value="Family A G protein-coupled receptor-like"/>
    <property type="match status" value="1"/>
</dbReference>
<dbReference type="PROSITE" id="PS00237">
    <property type="entry name" value="G_PROTEIN_RECEP_F1_1"/>
    <property type="match status" value="1"/>
</dbReference>
<dbReference type="PROSITE" id="PS50262">
    <property type="entry name" value="G_PROTEIN_RECEP_F1_2"/>
    <property type="match status" value="1"/>
</dbReference>
<organism>
    <name type="scientific">Mus musculus</name>
    <name type="common">Mouse</name>
    <dbReference type="NCBI Taxonomy" id="10090"/>
    <lineage>
        <taxon>Eukaryota</taxon>
        <taxon>Metazoa</taxon>
        <taxon>Chordata</taxon>
        <taxon>Craniata</taxon>
        <taxon>Vertebrata</taxon>
        <taxon>Euteleostomi</taxon>
        <taxon>Mammalia</taxon>
        <taxon>Eutheria</taxon>
        <taxon>Euarchontoglires</taxon>
        <taxon>Glires</taxon>
        <taxon>Rodentia</taxon>
        <taxon>Myomorpha</taxon>
        <taxon>Muroidea</taxon>
        <taxon>Muridae</taxon>
        <taxon>Murinae</taxon>
        <taxon>Mus</taxon>
        <taxon>Mus</taxon>
    </lineage>
</organism>
<reference key="1">
    <citation type="journal article" date="1995" name="J. Neurochem.">
        <title>Molecular cloning of alpha 1d-adrenergic receptor and tissue distribution of three alpha 1-adrenergic receptor subtypes in mouse.</title>
        <authorList>
            <person name="Alonso-Llamazares A."/>
            <person name="Zamanillo D."/>
            <person name="Casanova E."/>
            <person name="Ovalle S."/>
            <person name="Calvo P."/>
            <person name="Chinchetru M.A."/>
        </authorList>
    </citation>
    <scope>NUCLEOTIDE SEQUENCE [MRNA]</scope>
    <source>
        <tissue>Brain</tissue>
    </source>
</reference>
<reference key="2">
    <citation type="journal article" date="1999" name="Jpn. J. Pharmacol.">
        <title>Characterization of the mouse alpha1D-adrenergic receptor gene.</title>
        <authorList>
            <person name="Arai K."/>
            <person name="Tanoue A."/>
            <person name="Goda N."/>
            <person name="Takeda M."/>
            <person name="Takahashi K."/>
            <person name="Tsujimoto G."/>
        </authorList>
    </citation>
    <scope>NUCLEOTIDE SEQUENCE [GENOMIC DNA]</scope>
</reference>
<reference key="3">
    <citation type="journal article" date="1993" name="Genomics">
        <title>Identification, chromosomal location, and genome organization of mammalian G-protein-coupled receptors.</title>
        <authorList>
            <person name="Wilkie T.M."/>
            <person name="Chen Y."/>
            <person name="Gilbert D.J."/>
            <person name="Moore K.J."/>
            <person name="Yu L."/>
            <person name="Simon M.I."/>
            <person name="Copeland N.G."/>
            <person name="Jenkins N.A."/>
        </authorList>
    </citation>
    <scope>NUCLEOTIDE SEQUENCE [MRNA] OF 190-350</scope>
    <source>
        <tissue>Testis</tissue>
    </source>
</reference>
<reference key="4">
    <citation type="journal article" date="2016" name="Arterioscler. Thromb. Vasc. Biol.">
        <title>The Protein Acyl Transferase ZDHHC21 Modulates alpha1 Adrenergic Receptor Function and Regulates Hemodynamics.</title>
        <authorList>
            <person name="Marin E.P."/>
            <person name="Jozsef L."/>
            <person name="Di Lorenzo A."/>
            <person name="Held K.F."/>
            <person name="Luciano A.K."/>
            <person name="Melendez J."/>
            <person name="Milstone L.M."/>
            <person name="Velazquez H."/>
            <person name="Sessa W.C."/>
        </authorList>
    </citation>
    <scope>PALMITOYLATION BY ZDHHC21</scope>
</reference>
<name>ADA1D_MOUSE</name>
<evidence type="ECO:0000250" key="1"/>
<evidence type="ECO:0000250" key="2">
    <source>
        <dbReference type="UniProtKB" id="P25100"/>
    </source>
</evidence>
<evidence type="ECO:0000255" key="3"/>
<evidence type="ECO:0000255" key="4">
    <source>
        <dbReference type="PROSITE-ProRule" id="PRU00521"/>
    </source>
</evidence>
<evidence type="ECO:0000256" key="5">
    <source>
        <dbReference type="SAM" id="MobiDB-lite"/>
    </source>
</evidence>
<evidence type="ECO:0000269" key="6">
    <source>
    </source>
</evidence>
<evidence type="ECO:0000305" key="7"/>